<sequence>MGSVVDAPVVVEGVAENMLGDKKVTVVFVLGGPGSGKGTQCANIVEHFGFTHLSAGDLLRAEIKSGSENGTMIENMIKEGKIVPSEVTIKLLQDAMIKNENDKFLIDGFPRNEENRAAFENVTKISPAFVLFFDCSEEEMERRLLGRNQGRVDDNIETIRKRFKVFVESSLPVIEHYNAKNKVKKIDAAKPISEVFEDVKAIFAPYAKVE</sequence>
<proteinExistence type="evidence at transcript level"/>
<gene>
    <name type="primary">URA6</name>
    <name type="ordered locus">Os07g0624700</name>
    <name type="ordered locus">LOC_Os07g43170</name>
    <name type="ORF">P0524E08.133</name>
</gene>
<evidence type="ECO:0000255" key="1">
    <source>
        <dbReference type="HAMAP-Rule" id="MF_03172"/>
    </source>
</evidence>
<evidence type="ECO:0000305" key="2"/>
<feature type="chain" id="PRO_0000430123" description="UMP-CMP kinase 3">
    <location>
        <begin position="1"/>
        <end position="210"/>
    </location>
</feature>
<feature type="region of interest" description="NMP" evidence="1">
    <location>
        <begin position="54"/>
        <end position="83"/>
    </location>
</feature>
<feature type="region of interest" description="LID" evidence="1">
    <location>
        <begin position="146"/>
        <end position="154"/>
    </location>
</feature>
<feature type="binding site" evidence="1">
    <location>
        <begin position="34"/>
        <end position="39"/>
    </location>
    <ligand>
        <name>ATP</name>
        <dbReference type="ChEBI" id="CHEBI:30616"/>
    </ligand>
</feature>
<feature type="binding site" evidence="1">
    <location>
        <position position="60"/>
    </location>
    <ligand>
        <name>a ribonucleoside 5'-phosphate</name>
        <dbReference type="ChEBI" id="CHEBI:58043"/>
    </ligand>
</feature>
<feature type="binding site" evidence="1">
    <location>
        <begin position="81"/>
        <end position="83"/>
    </location>
    <ligand>
        <name>a ribonucleoside 5'-phosphate</name>
        <dbReference type="ChEBI" id="CHEBI:58043"/>
    </ligand>
</feature>
<feature type="binding site" evidence="1">
    <location>
        <begin position="108"/>
        <end position="111"/>
    </location>
    <ligand>
        <name>a ribonucleoside 5'-phosphate</name>
        <dbReference type="ChEBI" id="CHEBI:58043"/>
    </ligand>
</feature>
<feature type="binding site" evidence="1">
    <location>
        <position position="115"/>
    </location>
    <ligand>
        <name>CMP</name>
        <dbReference type="ChEBI" id="CHEBI:60377"/>
    </ligand>
</feature>
<feature type="binding site" evidence="1">
    <location>
        <position position="147"/>
    </location>
    <ligand>
        <name>ATP</name>
        <dbReference type="ChEBI" id="CHEBI:30616"/>
    </ligand>
</feature>
<feature type="binding site" evidence="1">
    <location>
        <position position="151"/>
    </location>
    <ligand>
        <name>a ribonucleoside 5'-phosphate</name>
        <dbReference type="ChEBI" id="CHEBI:58043"/>
    </ligand>
</feature>
<feature type="binding site" evidence="1">
    <location>
        <position position="162"/>
    </location>
    <ligand>
        <name>a ribonucleoside 5'-phosphate</name>
        <dbReference type="ChEBI" id="CHEBI:58043"/>
    </ligand>
</feature>
<feature type="binding site" evidence="1">
    <location>
        <position position="190"/>
    </location>
    <ligand>
        <name>ATP</name>
        <dbReference type="ChEBI" id="CHEBI:30616"/>
    </ligand>
</feature>
<feature type="sequence conflict" description="In Ref. 1; AAF23372." evidence="2" ref="1">
    <original>P</original>
    <variation>S</variation>
    <location>
        <position position="191"/>
    </location>
</feature>
<reference key="1">
    <citation type="journal article" date="1999" name="Plant Physiol.">
        <title>Characterization of UMP kinase cDNAs from rice (Accession Nos. AF187062 and AF187063) (PGR 99-174).</title>
        <authorList>
            <person name="Park S."/>
            <person name="Thornburg R.W."/>
        </authorList>
    </citation>
    <scope>NUCLEOTIDE SEQUENCE [MRNA]</scope>
    <source>
        <strain>cv. Nipponbare</strain>
    </source>
</reference>
<reference key="2">
    <citation type="journal article" date="2005" name="Nature">
        <title>The map-based sequence of the rice genome.</title>
        <authorList>
            <consortium name="International rice genome sequencing project (IRGSP)"/>
        </authorList>
    </citation>
    <scope>NUCLEOTIDE SEQUENCE [LARGE SCALE GENOMIC DNA]</scope>
    <source>
        <strain>cv. Nipponbare</strain>
    </source>
</reference>
<reference key="3">
    <citation type="journal article" date="2008" name="Nucleic Acids Res.">
        <title>The rice annotation project database (RAP-DB): 2008 update.</title>
        <authorList>
            <consortium name="The rice annotation project (RAP)"/>
        </authorList>
    </citation>
    <scope>GENOME REANNOTATION</scope>
    <source>
        <strain>cv. Nipponbare</strain>
    </source>
</reference>
<reference key="4">
    <citation type="journal article" date="2013" name="Rice">
        <title>Improvement of the Oryza sativa Nipponbare reference genome using next generation sequence and optical map data.</title>
        <authorList>
            <person name="Kawahara Y."/>
            <person name="de la Bastide M."/>
            <person name="Hamilton J.P."/>
            <person name="Kanamori H."/>
            <person name="McCombie W.R."/>
            <person name="Ouyang S."/>
            <person name="Schwartz D.C."/>
            <person name="Tanaka T."/>
            <person name="Wu J."/>
            <person name="Zhou S."/>
            <person name="Childs K.L."/>
            <person name="Davidson R.M."/>
            <person name="Lin H."/>
            <person name="Quesada-Ocampo L."/>
            <person name="Vaillancourt B."/>
            <person name="Sakai H."/>
            <person name="Lee S.S."/>
            <person name="Kim J."/>
            <person name="Numa H."/>
            <person name="Itoh T."/>
            <person name="Buell C.R."/>
            <person name="Matsumoto T."/>
        </authorList>
    </citation>
    <scope>GENOME REANNOTATION</scope>
    <source>
        <strain>cv. Nipponbare</strain>
    </source>
</reference>
<keyword id="KW-0067">ATP-binding</keyword>
<keyword id="KW-0963">Cytoplasm</keyword>
<keyword id="KW-0418">Kinase</keyword>
<keyword id="KW-0547">Nucleotide-binding</keyword>
<keyword id="KW-0539">Nucleus</keyword>
<keyword id="KW-0665">Pyrimidine biosynthesis</keyword>
<keyword id="KW-1185">Reference proteome</keyword>
<keyword id="KW-0808">Transferase</keyword>
<comment type="function">
    <text evidence="1">Catalyzes the phosphorylation of pyrimidine nucleoside monophosphates at the expense of ATP. Plays an important role in de novo pyrimidine nucleotide biosynthesis. Has preference for UMP and CMP as phosphate acceptors.</text>
</comment>
<comment type="catalytic activity">
    <reaction evidence="1">
        <text>UMP + ATP = UDP + ADP</text>
        <dbReference type="Rhea" id="RHEA:24400"/>
        <dbReference type="ChEBI" id="CHEBI:30616"/>
        <dbReference type="ChEBI" id="CHEBI:57865"/>
        <dbReference type="ChEBI" id="CHEBI:58223"/>
        <dbReference type="ChEBI" id="CHEBI:456216"/>
        <dbReference type="EC" id="2.7.4.14"/>
    </reaction>
</comment>
<comment type="catalytic activity">
    <reaction evidence="1">
        <text>CMP + ATP = CDP + ADP</text>
        <dbReference type="Rhea" id="RHEA:11600"/>
        <dbReference type="ChEBI" id="CHEBI:30616"/>
        <dbReference type="ChEBI" id="CHEBI:58069"/>
        <dbReference type="ChEBI" id="CHEBI:60377"/>
        <dbReference type="ChEBI" id="CHEBI:456216"/>
        <dbReference type="EC" id="2.7.4.14"/>
    </reaction>
</comment>
<comment type="catalytic activity">
    <reaction evidence="1">
        <text>dCMP + ATP = dCDP + ADP</text>
        <dbReference type="Rhea" id="RHEA:25094"/>
        <dbReference type="ChEBI" id="CHEBI:30616"/>
        <dbReference type="ChEBI" id="CHEBI:57566"/>
        <dbReference type="ChEBI" id="CHEBI:58593"/>
        <dbReference type="ChEBI" id="CHEBI:456216"/>
        <dbReference type="EC" id="2.7.4.14"/>
    </reaction>
</comment>
<comment type="cofactor">
    <cofactor evidence="1">
        <name>Mg(2+)</name>
        <dbReference type="ChEBI" id="CHEBI:18420"/>
    </cofactor>
    <text evidence="1">Binds 1 Mg(2+) ion per monomer.</text>
</comment>
<comment type="subunit">
    <text evidence="1">Monomer.</text>
</comment>
<comment type="subcellular location">
    <subcellularLocation>
        <location evidence="1">Cytoplasm</location>
    </subcellularLocation>
    <subcellularLocation>
        <location evidence="1">Nucleus</location>
    </subcellularLocation>
</comment>
<comment type="domain">
    <text evidence="1">Consists of three domains, a large central CORE domain and two small peripheral domains, NMPbind and LID, which undergo movements during catalysis. The LID domain closes over the site of phosphoryl transfer upon ATP binding. Assembling and dissambling the active center during each catalytic cycle provides an effective means to prevent ATP hydrolysis.</text>
</comment>
<comment type="similarity">
    <text evidence="1">Belongs to the adenylate kinase family. UMP-CMP kinase subfamily.</text>
</comment>
<protein>
    <recommendedName>
        <fullName evidence="1">UMP-CMP kinase 3</fullName>
        <ecNumber evidence="1">2.7.4.14</ecNumber>
    </recommendedName>
    <alternativeName>
        <fullName evidence="1">Deoxycytidylate kinase 3</fullName>
        <shortName evidence="1">CK 3</shortName>
        <shortName evidence="1">dCMP kinase 3</shortName>
    </alternativeName>
    <alternativeName>
        <fullName>UMP/CMP kinase a</fullName>
    </alternativeName>
    <alternativeName>
        <fullName>UMP/CMP kinase b</fullName>
    </alternativeName>
    <alternativeName>
        <fullName evidence="1">Uridine monophosphate/cytidine monophosphate kinase 3</fullName>
        <shortName evidence="1">UMP/CMP kinase 3</shortName>
        <shortName evidence="1">UMP/CMPK 3</shortName>
    </alternativeName>
</protein>
<dbReference type="EC" id="2.7.4.14" evidence="1"/>
<dbReference type="EMBL" id="AF187062">
    <property type="protein sequence ID" value="AAF23371.1"/>
    <property type="molecule type" value="mRNA"/>
</dbReference>
<dbReference type="EMBL" id="AF187063">
    <property type="protein sequence ID" value="AAF23372.1"/>
    <property type="molecule type" value="mRNA"/>
</dbReference>
<dbReference type="EMBL" id="AP004341">
    <property type="protein sequence ID" value="BAC79912.1"/>
    <property type="molecule type" value="Genomic_DNA"/>
</dbReference>
<dbReference type="EMBL" id="AP008213">
    <property type="protein sequence ID" value="BAF22241.1"/>
    <property type="molecule type" value="Genomic_DNA"/>
</dbReference>
<dbReference type="EMBL" id="AP014963">
    <property type="protein sequence ID" value="BAT02721.1"/>
    <property type="molecule type" value="Genomic_DNA"/>
</dbReference>
<dbReference type="RefSeq" id="XP_015644853.1">
    <property type="nucleotide sequence ID" value="XM_015789367.1"/>
</dbReference>
<dbReference type="SMR" id="Q7XI40"/>
<dbReference type="FunCoup" id="Q7XI40">
    <property type="interactions" value="2876"/>
</dbReference>
<dbReference type="STRING" id="39947.Q7XI40"/>
<dbReference type="PaxDb" id="39947-Q7XI40"/>
<dbReference type="EnsemblPlants" id="Os07t0624700-01">
    <property type="protein sequence ID" value="Os07t0624700-01"/>
    <property type="gene ID" value="Os07g0624700"/>
</dbReference>
<dbReference type="Gramene" id="Os07t0624700-01">
    <property type="protein sequence ID" value="Os07t0624700-01"/>
    <property type="gene ID" value="Os07g0624700"/>
</dbReference>
<dbReference type="KEGG" id="dosa:Os07g0624700"/>
<dbReference type="eggNOG" id="KOG3079">
    <property type="taxonomic scope" value="Eukaryota"/>
</dbReference>
<dbReference type="HOGENOM" id="CLU_032354_0_1_1"/>
<dbReference type="InParanoid" id="Q7XI40"/>
<dbReference type="OMA" id="EQTMPVI"/>
<dbReference type="OrthoDB" id="442176at2759"/>
<dbReference type="Proteomes" id="UP000000763">
    <property type="component" value="Chromosome 7"/>
</dbReference>
<dbReference type="Proteomes" id="UP000059680">
    <property type="component" value="Chromosome 7"/>
</dbReference>
<dbReference type="GO" id="GO:0005737">
    <property type="term" value="C:cytoplasm"/>
    <property type="evidence" value="ECO:0000318"/>
    <property type="project" value="GO_Central"/>
</dbReference>
<dbReference type="GO" id="GO:0005634">
    <property type="term" value="C:nucleus"/>
    <property type="evidence" value="ECO:0000318"/>
    <property type="project" value="GO_Central"/>
</dbReference>
<dbReference type="GO" id="GO:0004127">
    <property type="term" value="F:(d)CMP kinase activity"/>
    <property type="evidence" value="ECO:0000318"/>
    <property type="project" value="GO_Central"/>
</dbReference>
<dbReference type="GO" id="GO:0005524">
    <property type="term" value="F:ATP binding"/>
    <property type="evidence" value="ECO:0007669"/>
    <property type="project" value="UniProtKB-KW"/>
</dbReference>
<dbReference type="GO" id="GO:0036430">
    <property type="term" value="F:CMP kinase activity"/>
    <property type="evidence" value="ECO:0007669"/>
    <property type="project" value="RHEA"/>
</dbReference>
<dbReference type="GO" id="GO:0036431">
    <property type="term" value="F:dCMP kinase activity"/>
    <property type="evidence" value="ECO:0007669"/>
    <property type="project" value="RHEA"/>
</dbReference>
<dbReference type="GO" id="GO:0033862">
    <property type="term" value="F:UMP kinase activity"/>
    <property type="evidence" value="ECO:0000318"/>
    <property type="project" value="GO_Central"/>
</dbReference>
<dbReference type="GO" id="GO:0006207">
    <property type="term" value="P:'de novo' pyrimidine nucleobase biosynthetic process"/>
    <property type="evidence" value="ECO:0007669"/>
    <property type="project" value="InterPro"/>
</dbReference>
<dbReference type="GO" id="GO:0046705">
    <property type="term" value="P:CDP biosynthetic process"/>
    <property type="evidence" value="ECO:0000318"/>
    <property type="project" value="GO_Central"/>
</dbReference>
<dbReference type="GO" id="GO:0006225">
    <property type="term" value="P:UDP biosynthetic process"/>
    <property type="evidence" value="ECO:0000318"/>
    <property type="project" value="GO_Central"/>
</dbReference>
<dbReference type="CDD" id="cd01428">
    <property type="entry name" value="ADK"/>
    <property type="match status" value="1"/>
</dbReference>
<dbReference type="FunFam" id="3.40.50.300:FF:000315">
    <property type="entry name" value="Adenylate kinase 1"/>
    <property type="match status" value="1"/>
</dbReference>
<dbReference type="Gene3D" id="3.40.50.300">
    <property type="entry name" value="P-loop containing nucleotide triphosphate hydrolases"/>
    <property type="match status" value="1"/>
</dbReference>
<dbReference type="HAMAP" id="MF_00235">
    <property type="entry name" value="Adenylate_kinase_Adk"/>
    <property type="match status" value="1"/>
</dbReference>
<dbReference type="HAMAP" id="MF_03172">
    <property type="entry name" value="Adenylate_kinase_UMP_CMP_kin"/>
    <property type="match status" value="1"/>
</dbReference>
<dbReference type="InterPro" id="IPR000850">
    <property type="entry name" value="Adenylat/UMP-CMP_kin"/>
</dbReference>
<dbReference type="InterPro" id="IPR033690">
    <property type="entry name" value="Adenylat_kinase_CS"/>
</dbReference>
<dbReference type="InterPro" id="IPR027417">
    <property type="entry name" value="P-loop_NTPase"/>
</dbReference>
<dbReference type="InterPro" id="IPR006266">
    <property type="entry name" value="UMP_CMP_kinase"/>
</dbReference>
<dbReference type="NCBIfam" id="TIGR01359">
    <property type="entry name" value="UMP_CMP_kin_fam"/>
    <property type="match status" value="1"/>
</dbReference>
<dbReference type="PANTHER" id="PTHR23359">
    <property type="entry name" value="NUCLEOTIDE KINASE"/>
    <property type="match status" value="1"/>
</dbReference>
<dbReference type="Pfam" id="PF00406">
    <property type="entry name" value="ADK"/>
    <property type="match status" value="1"/>
</dbReference>
<dbReference type="PRINTS" id="PR00094">
    <property type="entry name" value="ADENYLTKNASE"/>
</dbReference>
<dbReference type="SUPFAM" id="SSF52540">
    <property type="entry name" value="P-loop containing nucleoside triphosphate hydrolases"/>
    <property type="match status" value="1"/>
</dbReference>
<dbReference type="PROSITE" id="PS00113">
    <property type="entry name" value="ADENYLATE_KINASE"/>
    <property type="match status" value="1"/>
</dbReference>
<name>KCY3_ORYSJ</name>
<organism>
    <name type="scientific">Oryza sativa subsp. japonica</name>
    <name type="common">Rice</name>
    <dbReference type="NCBI Taxonomy" id="39947"/>
    <lineage>
        <taxon>Eukaryota</taxon>
        <taxon>Viridiplantae</taxon>
        <taxon>Streptophyta</taxon>
        <taxon>Embryophyta</taxon>
        <taxon>Tracheophyta</taxon>
        <taxon>Spermatophyta</taxon>
        <taxon>Magnoliopsida</taxon>
        <taxon>Liliopsida</taxon>
        <taxon>Poales</taxon>
        <taxon>Poaceae</taxon>
        <taxon>BOP clade</taxon>
        <taxon>Oryzoideae</taxon>
        <taxon>Oryzeae</taxon>
        <taxon>Oryzinae</taxon>
        <taxon>Oryza</taxon>
        <taxon>Oryza sativa</taxon>
    </lineage>
</organism>
<accession>Q7XI40</accession>
<accession>A0A0P0X943</accession>
<accession>Q9SE47</accession>
<accession>Q9SE48</accession>